<gene>
    <name evidence="1" type="primary">psbL</name>
</gene>
<feature type="chain" id="PRO_0000219778" description="Photosystem II reaction center protein L">
    <location>
        <begin position="1"/>
        <end position="38"/>
    </location>
</feature>
<feature type="transmembrane region" description="Helical" evidence="1">
    <location>
        <begin position="17"/>
        <end position="37"/>
    </location>
</feature>
<keyword id="KW-0150">Chloroplast</keyword>
<keyword id="KW-0472">Membrane</keyword>
<keyword id="KW-0602">Photosynthesis</keyword>
<keyword id="KW-0604">Photosystem II</keyword>
<keyword id="KW-0934">Plastid</keyword>
<keyword id="KW-0674">Reaction center</keyword>
<keyword id="KW-1185">Reference proteome</keyword>
<keyword id="KW-0691">RNA editing</keyword>
<keyword id="KW-0793">Thylakoid</keyword>
<keyword id="KW-0812">Transmembrane</keyword>
<keyword id="KW-1133">Transmembrane helix</keyword>
<geneLocation type="chloroplast"/>
<accession>P60139</accession>
<accession>O47030</accession>
<accession>P12166</accession>
<accession>P12167</accession>
<accession>Q34007</accession>
<dbReference type="EMBL" id="Z00044">
    <property type="protein sequence ID" value="CAA77418.1"/>
    <property type="status" value="ALT_SEQ"/>
    <property type="molecule type" value="Genomic_DNA"/>
</dbReference>
<dbReference type="PIR" id="S05685">
    <property type="entry name" value="S05685"/>
</dbReference>
<dbReference type="RefSeq" id="NP_054515.2">
    <property type="nucleotide sequence ID" value="NC_001879.2"/>
</dbReference>
<dbReference type="SMR" id="P60139"/>
<dbReference type="GeneID" id="800491"/>
<dbReference type="KEGG" id="nta:800491"/>
<dbReference type="OrthoDB" id="99at2759"/>
<dbReference type="Proteomes" id="UP000084051">
    <property type="component" value="Unplaced"/>
</dbReference>
<dbReference type="GO" id="GO:0009535">
    <property type="term" value="C:chloroplast thylakoid membrane"/>
    <property type="evidence" value="ECO:0007669"/>
    <property type="project" value="UniProtKB-SubCell"/>
</dbReference>
<dbReference type="GO" id="GO:0009539">
    <property type="term" value="C:photosystem II reaction center"/>
    <property type="evidence" value="ECO:0007669"/>
    <property type="project" value="InterPro"/>
</dbReference>
<dbReference type="GO" id="GO:0015979">
    <property type="term" value="P:photosynthesis"/>
    <property type="evidence" value="ECO:0007669"/>
    <property type="project" value="UniProtKB-UniRule"/>
</dbReference>
<dbReference type="HAMAP" id="MF_01317">
    <property type="entry name" value="PSII_PsbL"/>
    <property type="match status" value="1"/>
</dbReference>
<dbReference type="InterPro" id="IPR003372">
    <property type="entry name" value="PSII_PsbL"/>
</dbReference>
<dbReference type="InterPro" id="IPR037266">
    <property type="entry name" value="PSII_PsbL_sf"/>
</dbReference>
<dbReference type="NCBIfam" id="NF001972">
    <property type="entry name" value="PRK00753.1"/>
    <property type="match status" value="1"/>
</dbReference>
<dbReference type="Pfam" id="PF02419">
    <property type="entry name" value="PsbL"/>
    <property type="match status" value="1"/>
</dbReference>
<dbReference type="SUPFAM" id="SSF161017">
    <property type="entry name" value="Photosystem II reaction center protein L, PsbL"/>
    <property type="match status" value="1"/>
</dbReference>
<reference key="1">
    <citation type="journal article" date="1986" name="EMBO J.">
        <title>The complete nucleotide sequence of the tobacco chloroplast genome: its gene organization and expression.</title>
        <authorList>
            <person name="Shinozaki K."/>
            <person name="Ohme M."/>
            <person name="Tanaka M."/>
            <person name="Wakasugi T."/>
            <person name="Hayashida N."/>
            <person name="Matsubayashi T."/>
            <person name="Zaita N."/>
            <person name="Chunwongse J."/>
            <person name="Obokata J."/>
            <person name="Yamaguchi-Shinozaki K."/>
            <person name="Ohto C."/>
            <person name="Torazawa K."/>
            <person name="Meng B.-Y."/>
            <person name="Sugita M."/>
            <person name="Deno H."/>
            <person name="Kamogashira T."/>
            <person name="Yamada K."/>
            <person name="Kusuda J."/>
            <person name="Takaiwa F."/>
            <person name="Kato A."/>
            <person name="Tohdoh N."/>
            <person name="Shimada H."/>
            <person name="Sugiura M."/>
        </authorList>
    </citation>
    <scope>NUCLEOTIDE SEQUENCE [LARGE SCALE GENOMIC DNA]</scope>
    <source>
        <strain>cv. Bright Yellow 4</strain>
    </source>
</reference>
<reference key="2">
    <citation type="journal article" date="1992" name="EMBO J.">
        <title>RNA editing in tobacco chloroplasts leads to the formation of a translatable psbL mRNA by a C to U substitution within the initiation codon.</title>
        <authorList>
            <person name="Kudla J."/>
            <person name="Igloi G.L."/>
            <person name="Metzlaff M."/>
            <person name="Hagemann R."/>
            <person name="Koessel H."/>
        </authorList>
    </citation>
    <scope>RNA EDITING OF INITIATOR CODON</scope>
    <source>
        <strain>cv. Havana</strain>
        <tissue>Leaf</tissue>
    </source>
</reference>
<reference key="3">
    <citation type="journal article" date="1996" name="EMBO J.">
        <title>Sequences directing C to U editing of the plastid psbL mRNA are located within a 22 nucleotide segment spanning the editing site.</title>
        <authorList>
            <person name="Chaudhuri S."/>
            <person name="Maliga P."/>
        </authorList>
    </citation>
    <scope>RNA EDITING OF INITIATOR CODON</scope>
    <source>
        <strain>cv. Petit Havana</strain>
    </source>
</reference>
<reference key="4">
    <citation type="journal article" date="1999" name="Mol. Gen. Genet.">
        <title>RNA editing sites in tobacco chloroplast transcripts: editing as a possible regulator of chloroplast RNA polymerase activity.</title>
        <authorList>
            <person name="Hirose T."/>
            <person name="Kusumegi T."/>
            <person name="Tsudzuki T."/>
            <person name="Sugiura M."/>
        </authorList>
    </citation>
    <scope>RNA EDITING OF INITIATOR CODON</scope>
    <source>
        <strain>cv. Bright Yellow 4</strain>
        <tissue>Leaf</tissue>
    </source>
</reference>
<reference key="5">
    <citation type="journal article" date="2003" name="Mol. Genet. Genomics">
        <title>Effects of selective inactivation of individual genes for low-molecular-mass subunits on the assembly of photosystem II, as revealed by chloroplast transformation: the psbEFLJoperon in Nicotiana tabacum.</title>
        <authorList>
            <person name="Swiatek M."/>
            <person name="Regel R.E."/>
            <person name="Meurer J."/>
            <person name="Wanner G."/>
            <person name="Pakrasi H.B."/>
            <person name="Ohad I."/>
            <person name="Herrmann R.G."/>
        </authorList>
    </citation>
    <scope>FUNCTION</scope>
    <scope>DISRUPTION PHENOTYPE</scope>
    <source>
        <strain>cv. Petit Havana</strain>
    </source>
</reference>
<reference key="6">
    <citation type="journal article" date="2004" name="Biochemistry">
        <title>Photosystem II proteins PsbL and PsbJ regulate electron flow to the plastoquinone pool.</title>
        <authorList>
            <person name="Ohad I."/>
            <person name="Dal Bosco C."/>
            <person name="Herrmann R.G."/>
            <person name="Meurer J."/>
        </authorList>
    </citation>
    <scope>FUNCTION</scope>
    <scope>DISRUPTION PHENOTYPE</scope>
    <source>
        <strain>cv. Petit Havana</strain>
    </source>
</reference>
<comment type="function">
    <text evidence="3 4">Required for PSII activity, may be involved in dimerization as well as contributing to the unidirectionality of electron flow. May prevent reduction of PSII by back electron flow from plastoquinol, thus protecting PSII from photoinactivation (PubMed:14979726).</text>
</comment>
<comment type="function">
    <text evidence="1">One of the components of the core complex of photosystem II (PSII). PSII is a light-driven water:plastoquinone oxidoreductase that uses light energy to abstract electrons from H(2)O, generating O(2) and a proton gradient subsequently used for ATP formation. It consists of a core antenna complex that captures photons, and an electron transfer chain that converts photonic excitation into a charge separation. This subunit is found at the monomer-monomer interface and is required for correct PSII assembly and/or dimerization.</text>
</comment>
<comment type="subunit">
    <text evidence="1">PSII is composed of 1 copy each of membrane proteins PsbA, PsbB, PsbC, PsbD, PsbE, PsbF, PsbH, PsbI, PsbJ, PsbK, PsbL, PsbM, PsbT, PsbX, PsbY, PsbZ, Psb30/Ycf12, at least 3 peripheral proteins of the oxygen-evolving complex and a large number of cofactors. It forms dimeric complexes.</text>
</comment>
<comment type="subcellular location">
    <subcellularLocation>
        <location evidence="1">Plastid</location>
        <location evidence="1">Chloroplast thylakoid membrane</location>
        <topology evidence="1">Single-pass membrane protein</topology>
    </subcellularLocation>
</comment>
<comment type="RNA editing">
    <location>
        <position position="1" evidence="2 5 6"/>
    </location>
    <text>The initiator methionine is created by RNA editing.</text>
</comment>
<comment type="disruption phenotype">
    <text evidence="3">Plants unable to grow photoautotrophically, although under low light (10 umol photons/m(2)/s) on a carbon source plants are green. Young leaves have residual PSII activity, PSII present mostly as monomers rather then dimers. Highly photosensitive.</text>
</comment>
<comment type="similarity">
    <text evidence="1">Belongs to the PsbL family.</text>
</comment>
<evidence type="ECO:0000255" key="1">
    <source>
        <dbReference type="HAMAP-Rule" id="MF_01317"/>
    </source>
</evidence>
<evidence type="ECO:0000269" key="2">
    <source>
    </source>
</evidence>
<evidence type="ECO:0000269" key="3">
    <source>
    </source>
</evidence>
<evidence type="ECO:0000269" key="4">
    <source>
    </source>
</evidence>
<evidence type="ECO:0000269" key="5">
    <source>
    </source>
</evidence>
<evidence type="ECO:0000269" key="6">
    <source>
    </source>
</evidence>
<protein>
    <recommendedName>
        <fullName evidence="1">Photosystem II reaction center protein L</fullName>
        <shortName evidence="1">PSII-L</shortName>
    </recommendedName>
</protein>
<sequence>MTQSNPNEQNVELNRTSLYWGLLLIFVLAVLFSNYFFN</sequence>
<proteinExistence type="evidence at transcript level"/>
<name>PSBL_TOBAC</name>
<organism>
    <name type="scientific">Nicotiana tabacum</name>
    <name type="common">Common tobacco</name>
    <dbReference type="NCBI Taxonomy" id="4097"/>
    <lineage>
        <taxon>Eukaryota</taxon>
        <taxon>Viridiplantae</taxon>
        <taxon>Streptophyta</taxon>
        <taxon>Embryophyta</taxon>
        <taxon>Tracheophyta</taxon>
        <taxon>Spermatophyta</taxon>
        <taxon>Magnoliopsida</taxon>
        <taxon>eudicotyledons</taxon>
        <taxon>Gunneridae</taxon>
        <taxon>Pentapetalae</taxon>
        <taxon>asterids</taxon>
        <taxon>lamiids</taxon>
        <taxon>Solanales</taxon>
        <taxon>Solanaceae</taxon>
        <taxon>Nicotianoideae</taxon>
        <taxon>Nicotianeae</taxon>
        <taxon>Nicotiana</taxon>
    </lineage>
</organism>